<reference key="1">
    <citation type="submission" date="2007-08" db="EMBL/GenBank/DDBJ databases">
        <authorList>
            <consortium name="The Citrobacter koseri Genome Sequencing Project"/>
            <person name="McClelland M."/>
            <person name="Sanderson E.K."/>
            <person name="Porwollik S."/>
            <person name="Spieth J."/>
            <person name="Clifton W.S."/>
            <person name="Latreille P."/>
            <person name="Courtney L."/>
            <person name="Wang C."/>
            <person name="Pepin K."/>
            <person name="Bhonagiri V."/>
            <person name="Nash W."/>
            <person name="Johnson M."/>
            <person name="Thiruvilangam P."/>
            <person name="Wilson R."/>
        </authorList>
    </citation>
    <scope>NUCLEOTIDE SEQUENCE [LARGE SCALE GENOMIC DNA]</scope>
    <source>
        <strain>ATCC BAA-895 / CDC 4225-83 / SGSC4696</strain>
    </source>
</reference>
<proteinExistence type="inferred from homology"/>
<comment type="function">
    <text evidence="1">Responsible for the transport of dicarboxylates such as succinate, fumarate, and malate from the periplasm across the membrane.</text>
</comment>
<comment type="subcellular location">
    <subcellularLocation>
        <location evidence="1">Cell inner membrane</location>
        <topology evidence="1">Multi-pass membrane protein</topology>
    </subcellularLocation>
</comment>
<comment type="similarity">
    <text evidence="1">Belongs to the dicarboxylate/amino acid:cation symporter (DAACS) (TC 2.A.23) family.</text>
</comment>
<keyword id="KW-0997">Cell inner membrane</keyword>
<keyword id="KW-1003">Cell membrane</keyword>
<keyword id="KW-0472">Membrane</keyword>
<keyword id="KW-1185">Reference proteome</keyword>
<keyword id="KW-0769">Symport</keyword>
<keyword id="KW-0812">Transmembrane</keyword>
<keyword id="KW-1133">Transmembrane helix</keyword>
<keyword id="KW-0813">Transport</keyword>
<gene>
    <name evidence="1" type="primary">dctA</name>
    <name type="ordered locus">CKO_04970</name>
</gene>
<name>DCTA_CITK8</name>
<evidence type="ECO:0000255" key="1">
    <source>
        <dbReference type="HAMAP-Rule" id="MF_01300"/>
    </source>
</evidence>
<protein>
    <recommendedName>
        <fullName evidence="1">C4-dicarboxylate transport protein</fullName>
    </recommendedName>
</protein>
<sequence length="428" mass="45455">MKTSLFKSLYFQVLTAIAIGILLGHYYPELGAQMKPLGDAFVKLIKMVIAPVIFCTVVTGIAGMESMKAVGRTGAVALLYFEIVSTIALIIGLIIVNVVQPGSGMNVDPATLDAKAVAIYAEQAKDQGIVGFLMDIIPGSVIGAFASGNILQVLLFAVMFGFALHRLGSKGQLIFNVIESFSQVIFGIINMIMRLAPIGAFGAMAFTIGKYGVGTLVQLGQLIVCFYITCILFVVVVLGSIARAAGFSIFKFIRYIREELLIVLGTSSSESVLPRMLDKMEKLGCRKSVVGLVIPTGYSFNLDGTSIYLTMAAVFIAQATNSHMDIFHQVTLLVVLLLSSKGAAGVTGSGFIVLAATISAVGHLPVAGLALILGIDRFMSEARALTNLVGNGVATVVVAKWVKELDHKKLDDVLNNRAPDGKTHELSS</sequence>
<feature type="chain" id="PRO_1000067442" description="C4-dicarboxylate transport protein">
    <location>
        <begin position="1"/>
        <end position="428"/>
    </location>
</feature>
<feature type="transmembrane region" description="Helical" evidence="1">
    <location>
        <begin position="4"/>
        <end position="24"/>
    </location>
</feature>
<feature type="transmembrane region" description="Helical" evidence="1">
    <location>
        <begin position="44"/>
        <end position="64"/>
    </location>
</feature>
<feature type="transmembrane region" description="Helical" evidence="1">
    <location>
        <begin position="76"/>
        <end position="96"/>
    </location>
</feature>
<feature type="transmembrane region" description="Helical" evidence="1">
    <location>
        <begin position="142"/>
        <end position="162"/>
    </location>
</feature>
<feature type="transmembrane region" description="Helical" evidence="1">
    <location>
        <begin position="184"/>
        <end position="204"/>
    </location>
</feature>
<feature type="transmembrane region" description="Helical" evidence="1">
    <location>
        <begin position="222"/>
        <end position="242"/>
    </location>
</feature>
<feature type="transmembrane region" description="Helical" evidence="1">
    <location>
        <begin position="289"/>
        <end position="309"/>
    </location>
</feature>
<feature type="transmembrane region" description="Helical" evidence="1">
    <location>
        <begin position="326"/>
        <end position="346"/>
    </location>
</feature>
<feature type="transmembrane region" description="Helical" evidence="1">
    <location>
        <begin position="352"/>
        <end position="372"/>
    </location>
</feature>
<organism>
    <name type="scientific">Citrobacter koseri (strain ATCC BAA-895 / CDC 4225-83 / SGSC4696)</name>
    <dbReference type="NCBI Taxonomy" id="290338"/>
    <lineage>
        <taxon>Bacteria</taxon>
        <taxon>Pseudomonadati</taxon>
        <taxon>Pseudomonadota</taxon>
        <taxon>Gammaproteobacteria</taxon>
        <taxon>Enterobacterales</taxon>
        <taxon>Enterobacteriaceae</taxon>
        <taxon>Citrobacter</taxon>
    </lineage>
</organism>
<accession>A8ARA1</accession>
<dbReference type="EMBL" id="CP000822">
    <property type="protein sequence ID" value="ABV16014.1"/>
    <property type="molecule type" value="Genomic_DNA"/>
</dbReference>
<dbReference type="RefSeq" id="WP_012135654.1">
    <property type="nucleotide sequence ID" value="NC_009792.1"/>
</dbReference>
<dbReference type="SMR" id="A8ARA1"/>
<dbReference type="STRING" id="290338.CKO_04970"/>
<dbReference type="GeneID" id="45138444"/>
<dbReference type="KEGG" id="cko:CKO_04970"/>
<dbReference type="HOGENOM" id="CLU_019375_7_0_6"/>
<dbReference type="OrthoDB" id="9766690at2"/>
<dbReference type="Proteomes" id="UP000008148">
    <property type="component" value="Chromosome"/>
</dbReference>
<dbReference type="GO" id="GO:0005886">
    <property type="term" value="C:plasma membrane"/>
    <property type="evidence" value="ECO:0007669"/>
    <property type="project" value="UniProtKB-SubCell"/>
</dbReference>
<dbReference type="GO" id="GO:0015138">
    <property type="term" value="F:fumarate transmembrane transporter activity"/>
    <property type="evidence" value="ECO:0007669"/>
    <property type="project" value="TreeGrafter"/>
</dbReference>
<dbReference type="GO" id="GO:0015366">
    <property type="term" value="F:malate:proton symporter activity"/>
    <property type="evidence" value="ECO:0007669"/>
    <property type="project" value="TreeGrafter"/>
</dbReference>
<dbReference type="GO" id="GO:0015141">
    <property type="term" value="F:succinate transmembrane transporter activity"/>
    <property type="evidence" value="ECO:0007669"/>
    <property type="project" value="TreeGrafter"/>
</dbReference>
<dbReference type="GO" id="GO:0070778">
    <property type="term" value="P:L-aspartate transmembrane transport"/>
    <property type="evidence" value="ECO:0007669"/>
    <property type="project" value="TreeGrafter"/>
</dbReference>
<dbReference type="FunFam" id="1.10.3860.10:FF:000001">
    <property type="entry name" value="C4-dicarboxylate transport protein"/>
    <property type="match status" value="1"/>
</dbReference>
<dbReference type="Gene3D" id="1.10.3860.10">
    <property type="entry name" value="Sodium:dicarboxylate symporter"/>
    <property type="match status" value="1"/>
</dbReference>
<dbReference type="HAMAP" id="MF_01300">
    <property type="entry name" value="C4_dicarb_transport"/>
    <property type="match status" value="1"/>
</dbReference>
<dbReference type="InterPro" id="IPR023954">
    <property type="entry name" value="C4_dicarb_transport"/>
</dbReference>
<dbReference type="InterPro" id="IPR001991">
    <property type="entry name" value="Na-dicarboxylate_symporter"/>
</dbReference>
<dbReference type="InterPro" id="IPR018107">
    <property type="entry name" value="Na-dicarboxylate_symporter_CS"/>
</dbReference>
<dbReference type="InterPro" id="IPR036458">
    <property type="entry name" value="Na:dicarbo_symporter_sf"/>
</dbReference>
<dbReference type="NCBIfam" id="NF002461">
    <property type="entry name" value="PRK01663.1"/>
    <property type="match status" value="1"/>
</dbReference>
<dbReference type="NCBIfam" id="NF009587">
    <property type="entry name" value="PRK13027.1"/>
    <property type="match status" value="1"/>
</dbReference>
<dbReference type="PANTHER" id="PTHR42865:SF1">
    <property type="entry name" value="AEROBIC C4-DICARBOXYLATE TRANSPORT PROTEIN"/>
    <property type="match status" value="1"/>
</dbReference>
<dbReference type="PANTHER" id="PTHR42865">
    <property type="entry name" value="PROTON/GLUTAMATE-ASPARTATE SYMPORTER"/>
    <property type="match status" value="1"/>
</dbReference>
<dbReference type="Pfam" id="PF00375">
    <property type="entry name" value="SDF"/>
    <property type="match status" value="1"/>
</dbReference>
<dbReference type="PRINTS" id="PR00173">
    <property type="entry name" value="EDTRNSPORT"/>
</dbReference>
<dbReference type="SUPFAM" id="SSF118215">
    <property type="entry name" value="Proton glutamate symport protein"/>
    <property type="match status" value="1"/>
</dbReference>
<dbReference type="PROSITE" id="PS00713">
    <property type="entry name" value="NA_DICARBOXYL_SYMP_1"/>
    <property type="match status" value="1"/>
</dbReference>
<dbReference type="PROSITE" id="PS00714">
    <property type="entry name" value="NA_DICARBOXYL_SYMP_2"/>
    <property type="match status" value="1"/>
</dbReference>